<sequence length="154" mass="17163">MQEKSIRLGIVVAEFNYDITQLMLQKALSHAKFLNAEVKVVIKVPGTFDMPLAIKKLLEKDFIDAVVTLGAVIKGETKHDEIVASQTARKIVDLSTEFNKPVTLGIIGHGATHEQAVERIEEYATRAVEAAIKLVQRTRKIDELKEVKETVIID</sequence>
<protein>
    <recommendedName>
        <fullName evidence="1">6,7-dimethyl-8-ribityllumazine synthase</fullName>
        <shortName evidence="1">DMRL synthase</shortName>
        <shortName evidence="1">LS</shortName>
        <shortName evidence="1">Lumazine synthase</shortName>
        <ecNumber evidence="1">2.5.1.78</ecNumber>
    </recommendedName>
</protein>
<accession>C3N782</accession>
<gene>
    <name evidence="1" type="primary">ribH</name>
    <name type="ordered locus">YG5714_1819</name>
</gene>
<reference key="1">
    <citation type="journal article" date="2009" name="Proc. Natl. Acad. Sci. U.S.A.">
        <title>Biogeography of the Sulfolobus islandicus pan-genome.</title>
        <authorList>
            <person name="Reno M.L."/>
            <person name="Held N.L."/>
            <person name="Fields C.J."/>
            <person name="Burke P.V."/>
            <person name="Whitaker R.J."/>
        </authorList>
    </citation>
    <scope>NUCLEOTIDE SEQUENCE [LARGE SCALE GENOMIC DNA]</scope>
    <source>
        <strain>Y.G.57.14 / Yellowstone #1</strain>
    </source>
</reference>
<keyword id="KW-0686">Riboflavin biosynthesis</keyword>
<keyword id="KW-0808">Transferase</keyword>
<proteinExistence type="inferred from homology"/>
<evidence type="ECO:0000255" key="1">
    <source>
        <dbReference type="HAMAP-Rule" id="MF_00178"/>
    </source>
</evidence>
<feature type="chain" id="PRO_1000203805" description="6,7-dimethyl-8-ribityllumazine synthase">
    <location>
        <begin position="1"/>
        <end position="154"/>
    </location>
</feature>
<feature type="active site" description="Proton donor" evidence="1">
    <location>
        <position position="79"/>
    </location>
</feature>
<feature type="binding site" evidence="1">
    <location>
        <position position="15"/>
    </location>
    <ligand>
        <name>5-amino-6-(D-ribitylamino)uracil</name>
        <dbReference type="ChEBI" id="CHEBI:15934"/>
    </ligand>
</feature>
<feature type="binding site" evidence="1">
    <location>
        <begin position="47"/>
        <end position="49"/>
    </location>
    <ligand>
        <name>5-amino-6-(D-ribitylamino)uracil</name>
        <dbReference type="ChEBI" id="CHEBI:15934"/>
    </ligand>
</feature>
<feature type="binding site" evidence="1">
    <location>
        <begin position="71"/>
        <end position="73"/>
    </location>
    <ligand>
        <name>5-amino-6-(D-ribitylamino)uracil</name>
        <dbReference type="ChEBI" id="CHEBI:15934"/>
    </ligand>
</feature>
<feature type="binding site" evidence="1">
    <location>
        <begin position="76"/>
        <end position="77"/>
    </location>
    <ligand>
        <name>(2S)-2-hydroxy-3-oxobutyl phosphate</name>
        <dbReference type="ChEBI" id="CHEBI:58830"/>
    </ligand>
</feature>
<feature type="binding site" evidence="1">
    <location>
        <position position="104"/>
    </location>
    <ligand>
        <name>5-amino-6-(D-ribitylamino)uracil</name>
        <dbReference type="ChEBI" id="CHEBI:15934"/>
    </ligand>
</feature>
<feature type="binding site" evidence="1">
    <location>
        <position position="119"/>
    </location>
    <ligand>
        <name>(2S)-2-hydroxy-3-oxobutyl phosphate</name>
        <dbReference type="ChEBI" id="CHEBI:58830"/>
    </ligand>
</feature>
<organism>
    <name type="scientific">Saccharolobus islandicus (strain Y.G.57.14 / Yellowstone #1)</name>
    <name type="common">Sulfolobus islandicus</name>
    <dbReference type="NCBI Taxonomy" id="439386"/>
    <lineage>
        <taxon>Archaea</taxon>
        <taxon>Thermoproteota</taxon>
        <taxon>Thermoprotei</taxon>
        <taxon>Sulfolobales</taxon>
        <taxon>Sulfolobaceae</taxon>
        <taxon>Saccharolobus</taxon>
    </lineage>
</organism>
<dbReference type="EC" id="2.5.1.78" evidence="1"/>
<dbReference type="EMBL" id="CP001403">
    <property type="protein sequence ID" value="ACP46076.1"/>
    <property type="molecule type" value="Genomic_DNA"/>
</dbReference>
<dbReference type="RefSeq" id="WP_012713917.1">
    <property type="nucleotide sequence ID" value="NC_012622.1"/>
</dbReference>
<dbReference type="SMR" id="C3N782"/>
<dbReference type="GeneID" id="7810838"/>
<dbReference type="KEGG" id="siy:YG5714_1819"/>
<dbReference type="HOGENOM" id="CLU_089358_3_1_2"/>
<dbReference type="UniPathway" id="UPA00275">
    <property type="reaction ID" value="UER00404"/>
</dbReference>
<dbReference type="Proteomes" id="UP000002308">
    <property type="component" value="Chromosome"/>
</dbReference>
<dbReference type="GO" id="GO:0009349">
    <property type="term" value="C:riboflavin synthase complex"/>
    <property type="evidence" value="ECO:0007669"/>
    <property type="project" value="InterPro"/>
</dbReference>
<dbReference type="GO" id="GO:0000906">
    <property type="term" value="F:6,7-dimethyl-8-ribityllumazine synthase activity"/>
    <property type="evidence" value="ECO:0007669"/>
    <property type="project" value="UniProtKB-UniRule"/>
</dbReference>
<dbReference type="GO" id="GO:0009231">
    <property type="term" value="P:riboflavin biosynthetic process"/>
    <property type="evidence" value="ECO:0007669"/>
    <property type="project" value="UniProtKB-UniRule"/>
</dbReference>
<dbReference type="CDD" id="cd09211">
    <property type="entry name" value="Lumazine_synthase_archaeal"/>
    <property type="match status" value="1"/>
</dbReference>
<dbReference type="FunFam" id="3.40.50.960:FF:000003">
    <property type="entry name" value="6,7-dimethyl-8-ribityllumazine synthase"/>
    <property type="match status" value="1"/>
</dbReference>
<dbReference type="Gene3D" id="3.40.50.960">
    <property type="entry name" value="Lumazine/riboflavin synthase"/>
    <property type="match status" value="1"/>
</dbReference>
<dbReference type="HAMAP" id="MF_00178">
    <property type="entry name" value="Lumazine_synth"/>
    <property type="match status" value="1"/>
</dbReference>
<dbReference type="InterPro" id="IPR034964">
    <property type="entry name" value="LS"/>
</dbReference>
<dbReference type="InterPro" id="IPR002180">
    <property type="entry name" value="LS/RS"/>
</dbReference>
<dbReference type="InterPro" id="IPR036467">
    <property type="entry name" value="LS/RS_sf"/>
</dbReference>
<dbReference type="NCBIfam" id="TIGR00114">
    <property type="entry name" value="lumazine-synth"/>
    <property type="match status" value="1"/>
</dbReference>
<dbReference type="PANTHER" id="PTHR21058:SF0">
    <property type="entry name" value="6,7-DIMETHYL-8-RIBITYLLUMAZINE SYNTHASE"/>
    <property type="match status" value="1"/>
</dbReference>
<dbReference type="PANTHER" id="PTHR21058">
    <property type="entry name" value="6,7-DIMETHYL-8-RIBITYLLUMAZINE SYNTHASE DMRL SYNTHASE LUMAZINE SYNTHASE"/>
    <property type="match status" value="1"/>
</dbReference>
<dbReference type="Pfam" id="PF00885">
    <property type="entry name" value="DMRL_synthase"/>
    <property type="match status" value="1"/>
</dbReference>
<dbReference type="SUPFAM" id="SSF52121">
    <property type="entry name" value="Lumazine synthase"/>
    <property type="match status" value="1"/>
</dbReference>
<comment type="function">
    <text evidence="1">Catalyzes the formation of 6,7-dimethyl-8-ribityllumazine by condensation of 5-amino-6-(D-ribitylamino)uracil with 3,4-dihydroxy-2-butanone 4-phosphate. This is the penultimate step in the biosynthesis of riboflavin.</text>
</comment>
<comment type="catalytic activity">
    <reaction evidence="1">
        <text>(2S)-2-hydroxy-3-oxobutyl phosphate + 5-amino-6-(D-ribitylamino)uracil = 6,7-dimethyl-8-(1-D-ribityl)lumazine + phosphate + 2 H2O + H(+)</text>
        <dbReference type="Rhea" id="RHEA:26152"/>
        <dbReference type="ChEBI" id="CHEBI:15377"/>
        <dbReference type="ChEBI" id="CHEBI:15378"/>
        <dbReference type="ChEBI" id="CHEBI:15934"/>
        <dbReference type="ChEBI" id="CHEBI:43474"/>
        <dbReference type="ChEBI" id="CHEBI:58201"/>
        <dbReference type="ChEBI" id="CHEBI:58830"/>
        <dbReference type="EC" id="2.5.1.78"/>
    </reaction>
</comment>
<comment type="pathway">
    <text evidence="1">Cofactor biosynthesis; riboflavin biosynthesis; riboflavin from 2-hydroxy-3-oxobutyl phosphate and 5-amino-6-(D-ribitylamino)uracil: step 1/2.</text>
</comment>
<comment type="similarity">
    <text evidence="1">Belongs to the DMRL synthase family.</text>
</comment>
<name>RISB_SACI7</name>